<gene>
    <name evidence="20" type="primary">IFNB1</name>
    <name type="synonym">IFB</name>
    <name type="synonym">IFNB</name>
</gene>
<comment type="function">
    <text evidence="1 4 5 7 9 10 11 14">Type I interferon cytokine that plays a key role in the innate immune response to infection, developing tumors and other inflammatory stimuli (PubMed:10049744, PubMed:10556041, PubMed:6157094, PubMed:6171735, PubMed:7665574, PubMed:8027027, PubMed:8969169). Signals via binding to high-affinity (IFNAR2) and low-affinity (IFNAR1) heterodimeric receptor, activating the canonical Jak-STAT signaling pathway resulting in transcriptional activation or repression of interferon-regulated genes that encode the effectors of the interferon response, such as antiviral proteins, regulators of cell proliferation and differentiation, and immunoregulatory proteins (PubMed:10049744, PubMed:10556041, PubMed:7665574, PubMed:8027027, PubMed:8969169). Signals mostly via binding to a IFNAR1-IFNAR2 heterodimeric receptor, but can also function with IFNAR1 alone and independently of Jak-STAT pathways (By similarity). Elicits a wide variety of responses, including antiviral and antibacterial activities, and can regulate the development of B-cells, myelopoiesis and lipopolysaccharide (LPS)-inducible production of tumor necrosis factor (By similarity). Plays a role in neuronal homeostasis by regulating dopamine turnover and protecting dopaminergic neurons: acts by promoting neuronal autophagy and alpha-synuclein clearance, thereby preventing dopaminergic neuron loss (By similarity). IFNB1 is more potent than interferon-alpha (IFN-alpha) in inducing the apoptotic and antiproliferative pathways required for control of tumor cell growth (By similarity).</text>
</comment>
<comment type="subunit">
    <text evidence="15">Monomer.</text>
</comment>
<comment type="interaction">
    <interactant intactId="EBI-12383562">
        <id>P01574</id>
    </interactant>
    <interactant intactId="EBI-594747">
        <id>P40855</id>
        <label>PEX19</label>
    </interactant>
    <organismsDiffer>false</organismsDiffer>
    <experiments>3</experiments>
</comment>
<comment type="subcellular location">
    <subcellularLocation>
        <location evidence="7">Secreted</location>
    </subcellularLocation>
</comment>
<comment type="pharmaceutical">
    <text evidence="12 13 18">Alleviates the exacerbations of multiple sclerosis (MS) (PubMed:8469318, PubMed:8469319). Available under the names Avonex (Biogen), Betaseron (Berlex) and Rebif (Serono) (PubMed:9345408). Betaseron is a slightly modified form of IFNB1 with two residue substitutions (PubMed:9345408).</text>
</comment>
<comment type="similarity">
    <text evidence="19">Belongs to the alpha/beta interferon family.</text>
</comment>
<comment type="online information" name="Avonex">
    <link uri="https://www.avonex.com"/>
    <text>Clinical information on Avonex</text>
</comment>
<dbReference type="EMBL" id="V00546">
    <property type="protein sequence ID" value="CAA23807.1"/>
    <property type="molecule type" value="mRNA"/>
</dbReference>
<dbReference type="EMBL" id="V00547">
    <property type="protein sequence ID" value="CAA23808.1"/>
    <property type="molecule type" value="mRNA"/>
</dbReference>
<dbReference type="EMBL" id="V00534">
    <property type="protein sequence ID" value="CAA23795.1"/>
    <property type="molecule type" value="Genomic_DNA"/>
</dbReference>
<dbReference type="EMBL" id="V00535">
    <property type="protein sequence ID" value="CAA23796.1"/>
    <property type="molecule type" value="Genomic_DNA"/>
</dbReference>
<dbReference type="EMBL" id="M28622">
    <property type="protein sequence ID" value="AAA36040.1"/>
    <property type="molecule type" value="mRNA"/>
</dbReference>
<dbReference type="EMBL" id="EF064725">
    <property type="protein sequence ID" value="ABK41908.1"/>
    <property type="molecule type" value="Genomic_DNA"/>
</dbReference>
<dbReference type="EMBL" id="AB451323">
    <property type="protein sequence ID" value="BAG70137.1"/>
    <property type="molecule type" value="mRNA"/>
</dbReference>
<dbReference type="EMBL" id="AB451452">
    <property type="protein sequence ID" value="BAG70266.1"/>
    <property type="molecule type" value="mRNA"/>
</dbReference>
<dbReference type="EMBL" id="CH471071">
    <property type="protein sequence ID" value="EAW58625.1"/>
    <property type="molecule type" value="Genomic_DNA"/>
</dbReference>
<dbReference type="EMBL" id="BC069314">
    <property type="protein sequence ID" value="AAH69314.1"/>
    <property type="molecule type" value="mRNA"/>
</dbReference>
<dbReference type="EMBL" id="BC096150">
    <property type="protein sequence ID" value="AAH96150.1"/>
    <property type="molecule type" value="mRNA"/>
</dbReference>
<dbReference type="EMBL" id="BC096151">
    <property type="protein sequence ID" value="AAH96151.1"/>
    <property type="molecule type" value="mRNA"/>
</dbReference>
<dbReference type="EMBL" id="BC096152">
    <property type="protein sequence ID" value="AAH96152.1"/>
    <property type="molecule type" value="mRNA"/>
</dbReference>
<dbReference type="EMBL" id="BC096153">
    <property type="protein sequence ID" value="AAH96153.1"/>
    <property type="molecule type" value="mRNA"/>
</dbReference>
<dbReference type="CCDS" id="CCDS6495.1"/>
<dbReference type="PIR" id="A93721">
    <property type="entry name" value="IVHUB1"/>
</dbReference>
<dbReference type="RefSeq" id="NP_002167.1">
    <property type="nucleotide sequence ID" value="NM_002176.4"/>
</dbReference>
<dbReference type="PDB" id="1AU1">
    <property type="method" value="X-ray"/>
    <property type="resolution" value="2.20 A"/>
    <property type="chains" value="A/B=22-187"/>
</dbReference>
<dbReference type="PDBsum" id="1AU1"/>
<dbReference type="SMR" id="P01574"/>
<dbReference type="BioGRID" id="109678">
    <property type="interactions" value="31"/>
</dbReference>
<dbReference type="ComplexPortal" id="CPX-6007">
    <property type="entry name" value="Interferon beta receptor-ligand complex"/>
</dbReference>
<dbReference type="CORUM" id="P01574"/>
<dbReference type="DIP" id="DIP-6018N"/>
<dbReference type="FunCoup" id="P01574">
    <property type="interactions" value="1084"/>
</dbReference>
<dbReference type="IntAct" id="P01574">
    <property type="interactions" value="4"/>
</dbReference>
<dbReference type="STRING" id="9606.ENSP00000369581"/>
<dbReference type="ChEMBL" id="CHEMBL4630876"/>
<dbReference type="DrugBank" id="DB02379">
    <property type="generic name" value="Beta-D-Glucose"/>
</dbReference>
<dbReference type="Allergome" id="9875">
    <property type="allergen name" value="Hom s IFN beta"/>
</dbReference>
<dbReference type="GlyConnect" id="291">
    <property type="glycosylation" value="1 N-Linked glycan"/>
</dbReference>
<dbReference type="GlyCosmos" id="P01574">
    <property type="glycosylation" value="1 site, 2 glycans"/>
</dbReference>
<dbReference type="GlyGen" id="P01574">
    <property type="glycosylation" value="4 sites, 2 N-linked glycans (2 sites)"/>
</dbReference>
<dbReference type="iPTMnet" id="P01574"/>
<dbReference type="PhosphoSitePlus" id="P01574"/>
<dbReference type="BioMuta" id="IFNB1"/>
<dbReference type="DMDM" id="124469"/>
<dbReference type="jPOST" id="P01574"/>
<dbReference type="MassIVE" id="P01574"/>
<dbReference type="PaxDb" id="9606-ENSP00000369581"/>
<dbReference type="PeptideAtlas" id="P01574"/>
<dbReference type="ProteomicsDB" id="51388"/>
<dbReference type="TopDownProteomics" id="P01574"/>
<dbReference type="Antibodypedia" id="3995">
    <property type="antibodies" value="1013 antibodies from 45 providers"/>
</dbReference>
<dbReference type="DNASU" id="3456"/>
<dbReference type="Ensembl" id="ENST00000380232.4">
    <property type="protein sequence ID" value="ENSP00000369581.2"/>
    <property type="gene ID" value="ENSG00000171855.7"/>
</dbReference>
<dbReference type="GeneID" id="3456"/>
<dbReference type="KEGG" id="hsa:3456"/>
<dbReference type="MANE-Select" id="ENST00000380232.4">
    <property type="protein sequence ID" value="ENSP00000369581.2"/>
    <property type="RefSeq nucleotide sequence ID" value="NM_002176.4"/>
    <property type="RefSeq protein sequence ID" value="NP_002167.1"/>
</dbReference>
<dbReference type="UCSC" id="uc003zok.4">
    <property type="organism name" value="human"/>
</dbReference>
<dbReference type="AGR" id="HGNC:5434"/>
<dbReference type="CTD" id="3456"/>
<dbReference type="DisGeNET" id="3456"/>
<dbReference type="GeneCards" id="IFNB1"/>
<dbReference type="HGNC" id="HGNC:5434">
    <property type="gene designation" value="IFNB1"/>
</dbReference>
<dbReference type="HPA" id="ENSG00000171855">
    <property type="expression patterns" value="Not detected"/>
</dbReference>
<dbReference type="MIM" id="147640">
    <property type="type" value="gene"/>
</dbReference>
<dbReference type="neXtProt" id="NX_P01574"/>
<dbReference type="OpenTargets" id="ENSG00000171855"/>
<dbReference type="PharmGKB" id="PA29672"/>
<dbReference type="VEuPathDB" id="HostDB:ENSG00000171855"/>
<dbReference type="eggNOG" id="ENOG502SQGR">
    <property type="taxonomic scope" value="Eukaryota"/>
</dbReference>
<dbReference type="GeneTree" id="ENSGT01000000214430"/>
<dbReference type="HOGENOM" id="CLU_109427_1_0_1"/>
<dbReference type="InParanoid" id="P01574"/>
<dbReference type="OMA" id="HWQKEHL"/>
<dbReference type="OrthoDB" id="8922121at2759"/>
<dbReference type="PAN-GO" id="P01574">
    <property type="GO annotations" value="12 GO annotations based on evolutionary models"/>
</dbReference>
<dbReference type="PhylomeDB" id="P01574"/>
<dbReference type="TreeFam" id="TF336177"/>
<dbReference type="PathwayCommons" id="P01574"/>
<dbReference type="Reactome" id="R-HSA-2559580">
    <property type="pathway name" value="Oxidative Stress Induced Senescence"/>
</dbReference>
<dbReference type="Reactome" id="R-HSA-909733">
    <property type="pathway name" value="Interferon alpha/beta signaling"/>
</dbReference>
<dbReference type="Reactome" id="R-HSA-912694">
    <property type="pathway name" value="Regulation of IFNA/IFNB signaling"/>
</dbReference>
<dbReference type="Reactome" id="R-HSA-918233">
    <property type="pathway name" value="TRAF3-dependent IRF activation pathway"/>
</dbReference>
<dbReference type="Reactome" id="R-HSA-933541">
    <property type="pathway name" value="TRAF6 mediated IRF7 activation"/>
</dbReference>
<dbReference type="Reactome" id="R-HSA-9705671">
    <property type="pathway name" value="SARS-CoV-2 activates/modulates innate and adaptive immune responses"/>
</dbReference>
<dbReference type="Reactome" id="R-HSA-983231">
    <property type="pathway name" value="Factors involved in megakaryocyte development and platelet production"/>
</dbReference>
<dbReference type="Reactome" id="R-HSA-9833109">
    <property type="pathway name" value="Evasion by RSV of host interferon responses"/>
</dbReference>
<dbReference type="SignaLink" id="P01574"/>
<dbReference type="SIGNOR" id="P01574"/>
<dbReference type="BioGRID-ORCS" id="3456">
    <property type="hits" value="9 hits in 1137 CRISPR screens"/>
</dbReference>
<dbReference type="EvolutionaryTrace" id="P01574"/>
<dbReference type="GeneWiki" id="IFNB1"/>
<dbReference type="GenomeRNAi" id="3456"/>
<dbReference type="Pharos" id="P01574">
    <property type="development level" value="Tbio"/>
</dbReference>
<dbReference type="PRO" id="PR:P01574"/>
<dbReference type="Proteomes" id="UP000005640">
    <property type="component" value="Chromosome 9"/>
</dbReference>
<dbReference type="RNAct" id="P01574">
    <property type="molecule type" value="protein"/>
</dbReference>
<dbReference type="Bgee" id="ENSG00000171855">
    <property type="expression patterns" value="Expressed in primordial germ cell in gonad and 8 other cell types or tissues"/>
</dbReference>
<dbReference type="GO" id="GO:0005576">
    <property type="term" value="C:extracellular region"/>
    <property type="evidence" value="ECO:0000304"/>
    <property type="project" value="Reactome"/>
</dbReference>
<dbReference type="GO" id="GO:0005615">
    <property type="term" value="C:extracellular space"/>
    <property type="evidence" value="ECO:0000314"/>
    <property type="project" value="UniProt"/>
</dbReference>
<dbReference type="GO" id="GO:0008811">
    <property type="term" value="F:chloramphenicol O-acetyltransferase activity"/>
    <property type="evidence" value="ECO:0000315"/>
    <property type="project" value="AgBase"/>
</dbReference>
<dbReference type="GO" id="GO:0005125">
    <property type="term" value="F:cytokine activity"/>
    <property type="evidence" value="ECO:0000314"/>
    <property type="project" value="UniProtKB"/>
</dbReference>
<dbReference type="GO" id="GO:0005126">
    <property type="term" value="F:cytokine receptor binding"/>
    <property type="evidence" value="ECO:0000314"/>
    <property type="project" value="UniProtKB"/>
</dbReference>
<dbReference type="GO" id="GO:0005132">
    <property type="term" value="F:type I interferon receptor binding"/>
    <property type="evidence" value="ECO:0000318"/>
    <property type="project" value="GO_Central"/>
</dbReference>
<dbReference type="GO" id="GO:0002250">
    <property type="term" value="P:adaptive immune response"/>
    <property type="evidence" value="ECO:0000318"/>
    <property type="project" value="GO_Central"/>
</dbReference>
<dbReference type="GO" id="GO:0002312">
    <property type="term" value="P:B cell activation involved in immune response"/>
    <property type="evidence" value="ECO:0000315"/>
    <property type="project" value="UniProtKB"/>
</dbReference>
<dbReference type="GO" id="GO:0042100">
    <property type="term" value="P:B cell proliferation"/>
    <property type="evidence" value="ECO:0000303"/>
    <property type="project" value="UniProtKB"/>
</dbReference>
<dbReference type="GO" id="GO:0007166">
    <property type="term" value="P:cell surface receptor signaling pathway"/>
    <property type="evidence" value="ECO:0000304"/>
    <property type="project" value="ProtInc"/>
</dbReference>
<dbReference type="GO" id="GO:0007259">
    <property type="term" value="P:cell surface receptor signaling pathway via JAK-STAT"/>
    <property type="evidence" value="ECO:0000314"/>
    <property type="project" value="UniProtKB"/>
</dbReference>
<dbReference type="GO" id="GO:0097696">
    <property type="term" value="P:cell surface receptor signaling pathway via STAT"/>
    <property type="evidence" value="ECO:0000314"/>
    <property type="project" value="BHF-UCL"/>
</dbReference>
<dbReference type="GO" id="GO:0071360">
    <property type="term" value="P:cellular response to exogenous dsRNA"/>
    <property type="evidence" value="ECO:0000304"/>
    <property type="project" value="BHF-UCL"/>
</dbReference>
<dbReference type="GO" id="GO:0035458">
    <property type="term" value="P:cellular response to interferon-beta"/>
    <property type="evidence" value="ECO:0000314"/>
    <property type="project" value="UniProtKB"/>
</dbReference>
<dbReference type="GO" id="GO:0098586">
    <property type="term" value="P:cellular response to virus"/>
    <property type="evidence" value="ECO:0000270"/>
    <property type="project" value="ARUK-UCL"/>
</dbReference>
<dbReference type="GO" id="GO:0019221">
    <property type="term" value="P:cytokine-mediated signaling pathway"/>
    <property type="evidence" value="ECO:0000314"/>
    <property type="project" value="UniProt"/>
</dbReference>
<dbReference type="GO" id="GO:0051607">
    <property type="term" value="P:defense response to virus"/>
    <property type="evidence" value="ECO:0000250"/>
    <property type="project" value="UniProtKB"/>
</dbReference>
<dbReference type="GO" id="GO:0006959">
    <property type="term" value="P:humoral immune response"/>
    <property type="evidence" value="ECO:0000318"/>
    <property type="project" value="GO_Central"/>
</dbReference>
<dbReference type="GO" id="GO:0045087">
    <property type="term" value="P:innate immune response"/>
    <property type="evidence" value="ECO:0000314"/>
    <property type="project" value="UniProt"/>
</dbReference>
<dbReference type="GO" id="GO:0030101">
    <property type="term" value="P:natural killer cell activation"/>
    <property type="evidence" value="ECO:0000303"/>
    <property type="project" value="UniProtKB"/>
</dbReference>
<dbReference type="GO" id="GO:0002323">
    <property type="term" value="P:natural killer cell activation involved in immune response"/>
    <property type="evidence" value="ECO:0000318"/>
    <property type="project" value="GO_Central"/>
</dbReference>
<dbReference type="GO" id="GO:0140123">
    <property type="term" value="P:negative regulation of Lewy body formation"/>
    <property type="evidence" value="ECO:0000250"/>
    <property type="project" value="UniProtKB"/>
</dbReference>
<dbReference type="GO" id="GO:0045581">
    <property type="term" value="P:negative regulation of T cell differentiation"/>
    <property type="evidence" value="ECO:0000314"/>
    <property type="project" value="UniProtKB"/>
</dbReference>
<dbReference type="GO" id="GO:2000552">
    <property type="term" value="P:negative regulation of T-helper 2 cell cytokine production"/>
    <property type="evidence" value="ECO:0000314"/>
    <property type="project" value="UniProtKB"/>
</dbReference>
<dbReference type="GO" id="GO:0045071">
    <property type="term" value="P:negative regulation of viral genome replication"/>
    <property type="evidence" value="ECO:0000314"/>
    <property type="project" value="BHF-UCL"/>
</dbReference>
<dbReference type="GO" id="GO:0070050">
    <property type="term" value="P:neuron cellular homeostasis"/>
    <property type="evidence" value="ECO:0000250"/>
    <property type="project" value="UniProtKB"/>
</dbReference>
<dbReference type="GO" id="GO:2001235">
    <property type="term" value="P:positive regulation of apoptotic signaling pathway"/>
    <property type="evidence" value="ECO:0000314"/>
    <property type="project" value="UniProtKB"/>
</dbReference>
<dbReference type="GO" id="GO:0010508">
    <property type="term" value="P:positive regulation of autophagy"/>
    <property type="evidence" value="ECO:0000250"/>
    <property type="project" value="UniProtKB"/>
</dbReference>
<dbReference type="GO" id="GO:0045089">
    <property type="term" value="P:positive regulation of innate immune response"/>
    <property type="evidence" value="ECO:0000303"/>
    <property type="project" value="UniProtKB"/>
</dbReference>
<dbReference type="GO" id="GO:0045944">
    <property type="term" value="P:positive regulation of transcription by RNA polymerase II"/>
    <property type="evidence" value="ECO:0000314"/>
    <property type="project" value="BHF-UCL"/>
</dbReference>
<dbReference type="GO" id="GO:0045343">
    <property type="term" value="P:regulation of MHC class I biosynthetic process"/>
    <property type="evidence" value="ECO:0000303"/>
    <property type="project" value="UniProtKB"/>
</dbReference>
<dbReference type="GO" id="GO:0043330">
    <property type="term" value="P:response to exogenous dsRNA"/>
    <property type="evidence" value="ECO:0000314"/>
    <property type="project" value="MGI"/>
</dbReference>
<dbReference type="GO" id="GO:0009615">
    <property type="term" value="P:response to virus"/>
    <property type="evidence" value="ECO:0000303"/>
    <property type="project" value="UniProtKB"/>
</dbReference>
<dbReference type="GO" id="GO:0002286">
    <property type="term" value="P:T cell activation involved in immune response"/>
    <property type="evidence" value="ECO:0000318"/>
    <property type="project" value="GO_Central"/>
</dbReference>
<dbReference type="GO" id="GO:0060337">
    <property type="term" value="P:type I interferon-mediated signaling pathway"/>
    <property type="evidence" value="ECO:0000314"/>
    <property type="project" value="BHF-UCL"/>
</dbReference>
<dbReference type="CDD" id="cd00095">
    <property type="entry name" value="IFab"/>
    <property type="match status" value="1"/>
</dbReference>
<dbReference type="FunFam" id="1.20.1250.10:FF:000026">
    <property type="entry name" value="Interferon beta"/>
    <property type="match status" value="1"/>
</dbReference>
<dbReference type="Gene3D" id="1.20.1250.10">
    <property type="match status" value="1"/>
</dbReference>
<dbReference type="InterPro" id="IPR009079">
    <property type="entry name" value="4_helix_cytokine-like_core"/>
</dbReference>
<dbReference type="InterPro" id="IPR000471">
    <property type="entry name" value="Interferon_alpha/beta/delta"/>
</dbReference>
<dbReference type="PANTHER" id="PTHR11691:SF73">
    <property type="entry name" value="INTERFERON BETA"/>
    <property type="match status" value="1"/>
</dbReference>
<dbReference type="PANTHER" id="PTHR11691">
    <property type="entry name" value="TYPE I INTERFERON"/>
    <property type="match status" value="1"/>
</dbReference>
<dbReference type="Pfam" id="PF00143">
    <property type="entry name" value="Interferon"/>
    <property type="match status" value="1"/>
</dbReference>
<dbReference type="PRINTS" id="PR00266">
    <property type="entry name" value="INTERFERONAB"/>
</dbReference>
<dbReference type="SMART" id="SM00076">
    <property type="entry name" value="IFabd"/>
    <property type="match status" value="1"/>
</dbReference>
<dbReference type="SUPFAM" id="SSF47266">
    <property type="entry name" value="4-helical cytokines"/>
    <property type="match status" value="1"/>
</dbReference>
<dbReference type="PROSITE" id="PS00252">
    <property type="entry name" value="INTERFERON_A_B_D"/>
    <property type="match status" value="1"/>
</dbReference>
<feature type="signal peptide" evidence="3">
    <location>
        <begin position="1"/>
        <end position="21"/>
    </location>
</feature>
<feature type="chain" id="PRO_0000016400" description="Interferon beta">
    <location>
        <begin position="22"/>
        <end position="187"/>
    </location>
</feature>
<feature type="modified residue" description="Phosphotyrosine" evidence="2">
    <location>
        <position position="24"/>
    </location>
</feature>
<feature type="glycosylation site" description="N-linked (GlcNAc...) asparagine" evidence="15">
    <location>
        <position position="101"/>
    </location>
</feature>
<feature type="disulfide bond" evidence="8 15">
    <location>
        <begin position="52"/>
        <end position="162"/>
    </location>
</feature>
<feature type="sequence variant" id="VAR_004016" description="Variant found in a clone obtained from a fibroblast cell line; does not form the essential disulfide bond; results in loss of antiviral activity." evidence="9">
    <original>C</original>
    <variation>Y</variation>
    <location>
        <position position="162"/>
    </location>
</feature>
<feature type="sequence variant" id="VAR_036330" description="In a breast cancer sample; somatic mutation." evidence="6">
    <original>W</original>
    <variation>C</variation>
    <location>
        <position position="164"/>
    </location>
</feature>
<feature type="helix" evidence="21">
    <location>
        <begin position="24"/>
        <end position="42"/>
    </location>
</feature>
<feature type="helix" evidence="21">
    <location>
        <begin position="51"/>
        <end position="55"/>
    </location>
</feature>
<feature type="helix" evidence="21">
    <location>
        <begin position="63"/>
        <end position="67"/>
    </location>
</feature>
<feature type="helix" evidence="21">
    <location>
        <begin position="73"/>
        <end position="91"/>
    </location>
</feature>
<feature type="helix" evidence="21">
    <location>
        <begin position="96"/>
        <end position="98"/>
    </location>
</feature>
<feature type="helix" evidence="21">
    <location>
        <begin position="102"/>
        <end position="127"/>
    </location>
</feature>
<feature type="turn" evidence="21">
    <location>
        <begin position="137"/>
        <end position="139"/>
    </location>
</feature>
<feature type="helix" evidence="21">
    <location>
        <begin position="140"/>
        <end position="156"/>
    </location>
</feature>
<feature type="turn" evidence="21">
    <location>
        <begin position="157"/>
        <end position="159"/>
    </location>
</feature>
<feature type="helix" evidence="21">
    <location>
        <begin position="161"/>
        <end position="182"/>
    </location>
</feature>
<name>IFNB_HUMAN</name>
<accession>P01574</accession>
<accession>Q5VWC9</accession>
<protein>
    <recommendedName>
        <fullName evidence="16">Interferon beta</fullName>
        <shortName evidence="16">IFN-beta</shortName>
    </recommendedName>
    <alternativeName>
        <fullName evidence="17">Fibroblast interferon</fullName>
    </alternativeName>
</protein>
<evidence type="ECO:0000250" key="1">
    <source>
        <dbReference type="UniProtKB" id="P01575"/>
    </source>
</evidence>
<evidence type="ECO:0000250" key="2">
    <source>
        <dbReference type="UniProtKB" id="P70499"/>
    </source>
</evidence>
<evidence type="ECO:0000255" key="3"/>
<evidence type="ECO:0000269" key="4">
    <source>
    </source>
</evidence>
<evidence type="ECO:0000269" key="5">
    <source>
    </source>
</evidence>
<evidence type="ECO:0000269" key="6">
    <source>
    </source>
</evidence>
<evidence type="ECO:0000269" key="7">
    <source>
    </source>
</evidence>
<evidence type="ECO:0000269" key="8">
    <source>
    </source>
</evidence>
<evidence type="ECO:0000269" key="9">
    <source>
    </source>
</evidence>
<evidence type="ECO:0000269" key="10">
    <source>
    </source>
</evidence>
<evidence type="ECO:0000269" key="11">
    <source>
    </source>
</evidence>
<evidence type="ECO:0000269" key="12">
    <source>
    </source>
</evidence>
<evidence type="ECO:0000269" key="13">
    <source>
    </source>
</evidence>
<evidence type="ECO:0000269" key="14">
    <source>
    </source>
</evidence>
<evidence type="ECO:0000269" key="15">
    <source>
    </source>
</evidence>
<evidence type="ECO:0000303" key="16">
    <source>
    </source>
</evidence>
<evidence type="ECO:0000303" key="17">
    <source>
    </source>
</evidence>
<evidence type="ECO:0000303" key="18">
    <source>
    </source>
</evidence>
<evidence type="ECO:0000305" key="19"/>
<evidence type="ECO:0000312" key="20">
    <source>
        <dbReference type="HGNC" id="HGNC:5434"/>
    </source>
</evidence>
<evidence type="ECO:0007829" key="21">
    <source>
        <dbReference type="PDB" id="1AU1"/>
    </source>
</evidence>
<keyword id="KW-0002">3D-structure</keyword>
<keyword id="KW-0051">Antiviral defense</keyword>
<keyword id="KW-0202">Cytokine</keyword>
<keyword id="KW-1015">Disulfide bond</keyword>
<keyword id="KW-0325">Glycoprotein</keyword>
<keyword id="KW-0582">Pharmaceutical</keyword>
<keyword id="KW-0597">Phosphoprotein</keyword>
<keyword id="KW-1267">Proteomics identification</keyword>
<keyword id="KW-1185">Reference proteome</keyword>
<keyword id="KW-0964">Secreted</keyword>
<keyword id="KW-0732">Signal</keyword>
<reference key="1">
    <citation type="journal article" date="1980" name="Gene">
        <title>The nucleotide sequence of human fibroblast interferon cDNA.</title>
        <authorList>
            <person name="Taniguchi T."/>
            <person name="Ohno S."/>
            <person name="Fujii-Kuriyama Y."/>
            <person name="Muramatsu M."/>
        </authorList>
    </citation>
    <scope>NUCLEOTIDE SEQUENCE [MRNA]</scope>
</reference>
<reference key="2">
    <citation type="journal article" date="1980" name="Nature">
        <title>Isolation and structure of a human fibroblast interferon gene.</title>
        <authorList>
            <person name="Derynck R."/>
            <person name="Content J."/>
            <person name="Declercq E."/>
            <person name="Volckaert G."/>
            <person name="Tavernier J."/>
            <person name="Devos R."/>
            <person name="Fiers W."/>
        </authorList>
    </citation>
    <scope>NUCLEOTIDE SEQUENCE [GENOMIC DNA]</scope>
    <scope>FUNCTION</scope>
    <scope>SUBCELLULAR LOCATION</scope>
</reference>
<reference key="3">
    <citation type="journal article" date="1980" name="Nucleic Acids Res.">
        <title>Synthesis of human fibroblast interferon by E. coli.</title>
        <authorList>
            <person name="Goeddel D.V."/>
            <person name="Shepard H.M."/>
            <person name="Yelverton E."/>
            <person name="Leung D."/>
            <person name="Crea R."/>
            <person name="Sloma A."/>
            <person name="Pestka S."/>
        </authorList>
    </citation>
    <scope>NUCLEOTIDE SEQUENCE [MRNA]</scope>
</reference>
<reference key="4">
    <citation type="journal article" date="1981" name="Nucleic Acids Res.">
        <title>Human fibroblast interferon gene lacks introns.</title>
        <authorList>
            <person name="Lawn R.M."/>
            <person name="Adelman J."/>
            <person name="Franke A.E."/>
            <person name="Houck C.M."/>
            <person name="Gross M."/>
            <person name="Najarian R."/>
            <person name="Goeddel D.V."/>
        </authorList>
    </citation>
    <scope>NUCLEOTIDE SEQUENCE [GENOMIC DNA]</scope>
</reference>
<reference key="5">
    <citation type="journal article" date="1981" name="Proc. Natl. Acad. Sci. U.S.A.">
        <title>Structure of a chromosomal gene for human interferon beta.</title>
        <authorList>
            <person name="Ohno S."/>
            <person name="Taniguchi T."/>
        </authorList>
    </citation>
    <scope>NUCLEOTIDE SEQUENCE [GENOMIC DNA]</scope>
</reference>
<reference key="6">
    <citation type="journal article" date="1980" name="Nucleic Acids Res.">
        <title>The complete amino acid sequence of human fibroblast interferon as deduced using synthetic oligodeoxyribonucleotide primers of reverse transcriptase.</title>
        <authorList>
            <person name="Houghton M."/>
            <person name="Eaton M.A.W."/>
            <person name="Stewart A.G."/>
            <person name="Smith J.C."/>
            <person name="Doel S.M."/>
            <person name="Cartlin G.H."/>
            <person name="Lewis H.M."/>
            <person name="Patel T.P."/>
            <person name="Emtage J.S."/>
            <person name="Carey N.H."/>
            <person name="Porter A.G."/>
        </authorList>
    </citation>
    <scope>NUCLEOTIDE SEQUENCE [MRNA]</scope>
</reference>
<reference key="7">
    <citation type="journal article" date="1985" name="J. Interferon Res.">
        <title>On the relationship between human interferon alpha 1 and beta 1 genes.</title>
        <authorList>
            <person name="May L.T."/>
            <person name="Sehgal P.B."/>
        </authorList>
    </citation>
    <scope>NUCLEOTIDE SEQUENCE [MRNA]</scope>
</reference>
<reference key="8">
    <citation type="submission" date="2006-10" db="EMBL/GenBank/DDBJ databases">
        <authorList>
            <person name="Livingston R.J."/>
            <person name="Shaffer T."/>
            <person name="McFarland I."/>
            <person name="Nguyen C.P."/>
            <person name="Stanaway I.B."/>
            <person name="Rajkumar N."/>
            <person name="Johnson E.J."/>
            <person name="da Ponte S.H."/>
            <person name="Willa H."/>
            <person name="Ahearn M.O."/>
            <person name="Bertucci C."/>
            <person name="Acklestad J."/>
            <person name="Carroll A."/>
            <person name="Swanson J."/>
            <person name="Gildersleeve H.I."/>
            <person name="Nickerson D.A."/>
        </authorList>
    </citation>
    <scope>NUCLEOTIDE SEQUENCE [GENOMIC DNA]</scope>
</reference>
<reference key="9">
    <citation type="journal article" date="2008" name="Nat. Methods">
        <title>Human protein factory for converting the transcriptome into an in vitro-expressed proteome.</title>
        <authorList>
            <person name="Goshima N."/>
            <person name="Kawamura Y."/>
            <person name="Fukumoto A."/>
            <person name="Miura A."/>
            <person name="Honma R."/>
            <person name="Satoh R."/>
            <person name="Wakamatsu A."/>
            <person name="Yamamoto J."/>
            <person name="Kimura K."/>
            <person name="Nishikawa T."/>
            <person name="Andoh T."/>
            <person name="Iida Y."/>
            <person name="Ishikawa K."/>
            <person name="Ito E."/>
            <person name="Kagawa N."/>
            <person name="Kaminaga C."/>
            <person name="Kanehori K."/>
            <person name="Kawakami B."/>
            <person name="Kenmochi K."/>
            <person name="Kimura R."/>
            <person name="Kobayashi M."/>
            <person name="Kuroita T."/>
            <person name="Kuwayama H."/>
            <person name="Maruyama Y."/>
            <person name="Matsuo K."/>
            <person name="Minami K."/>
            <person name="Mitsubori M."/>
            <person name="Mori M."/>
            <person name="Morishita R."/>
            <person name="Murase A."/>
            <person name="Nishikawa A."/>
            <person name="Nishikawa S."/>
            <person name="Okamoto T."/>
            <person name="Sakagami N."/>
            <person name="Sakamoto Y."/>
            <person name="Sasaki Y."/>
            <person name="Seki T."/>
            <person name="Sono S."/>
            <person name="Sugiyama A."/>
            <person name="Sumiya T."/>
            <person name="Takayama T."/>
            <person name="Takayama Y."/>
            <person name="Takeda H."/>
            <person name="Togashi T."/>
            <person name="Yahata K."/>
            <person name="Yamada H."/>
            <person name="Yanagisawa Y."/>
            <person name="Endo Y."/>
            <person name="Imamoto F."/>
            <person name="Kisu Y."/>
            <person name="Tanaka S."/>
            <person name="Isogai T."/>
            <person name="Imai J."/>
            <person name="Watanabe S."/>
            <person name="Nomura N."/>
        </authorList>
    </citation>
    <scope>NUCLEOTIDE SEQUENCE [LARGE SCALE MRNA]</scope>
</reference>
<reference key="10">
    <citation type="submission" date="2005-09" db="EMBL/GenBank/DDBJ databases">
        <authorList>
            <person name="Mural R.J."/>
            <person name="Istrail S."/>
            <person name="Sutton G."/>
            <person name="Florea L."/>
            <person name="Halpern A.L."/>
            <person name="Mobarry C.M."/>
            <person name="Lippert R."/>
            <person name="Walenz B."/>
            <person name="Shatkay H."/>
            <person name="Dew I."/>
            <person name="Miller J.R."/>
            <person name="Flanigan M.J."/>
            <person name="Edwards N.J."/>
            <person name="Bolanos R."/>
            <person name="Fasulo D."/>
            <person name="Halldorsson B.V."/>
            <person name="Hannenhalli S."/>
            <person name="Turner R."/>
            <person name="Yooseph S."/>
            <person name="Lu F."/>
            <person name="Nusskern D.R."/>
            <person name="Shue B.C."/>
            <person name="Zheng X.H."/>
            <person name="Zhong F."/>
            <person name="Delcher A.L."/>
            <person name="Huson D.H."/>
            <person name="Kravitz S.A."/>
            <person name="Mouchard L."/>
            <person name="Reinert K."/>
            <person name="Remington K.A."/>
            <person name="Clark A.G."/>
            <person name="Waterman M.S."/>
            <person name="Eichler E.E."/>
            <person name="Adams M.D."/>
            <person name="Hunkapiller M.W."/>
            <person name="Myers E.W."/>
            <person name="Venter J.C."/>
        </authorList>
    </citation>
    <scope>NUCLEOTIDE SEQUENCE [LARGE SCALE GENOMIC DNA]</scope>
</reference>
<reference key="11">
    <citation type="journal article" date="2004" name="Genome Res.">
        <title>The status, quality, and expansion of the NIH full-length cDNA project: the Mammalian Gene Collection (MGC).</title>
        <authorList>
            <consortium name="The MGC Project Team"/>
        </authorList>
    </citation>
    <scope>NUCLEOTIDE SEQUENCE [LARGE SCALE MRNA]</scope>
</reference>
<reference key="12">
    <citation type="journal article" date="1980" name="Nucleic Acids Res.">
        <title>The amino-terminal sequence of human fibroblast interferon as deduced from reverse transcripts obtained using synthetic oligonucleotide primers.</title>
        <authorList>
            <person name="Houghton M."/>
            <person name="Stewart A.G."/>
            <person name="Doel S.M."/>
            <person name="Emtage J.S."/>
            <person name="Eaton M.A.W."/>
            <person name="Smith J.C."/>
            <person name="Patel T.P."/>
            <person name="Lewis H.M."/>
            <person name="Porter A.G."/>
            <person name="Birch J.R."/>
            <person name="Cartwright T."/>
            <person name="Carey N.H."/>
        </authorList>
    </citation>
    <scope>NUCLEOTIDE SEQUENCE [MRNA] OF 1-68</scope>
</reference>
<reference key="13">
    <citation type="journal article" date="1981" name="Nature">
        <title>A single amino acid change in IFN-beta1 abolishes its antiviral activity.</title>
        <authorList>
            <person name="Shepard H.M."/>
            <person name="Leung D."/>
            <person name="Stebbing N."/>
            <person name="Goeddel D.V."/>
        </authorList>
    </citation>
    <scope>NUCLEOTIDE SEQUENCE [MRNA] OF 71-187</scope>
    <scope>FUNCTION</scope>
    <scope>VARIANT TYR-162</scope>
    <scope>CHARACTERIZATION OF VARIANT TYR-162</scope>
</reference>
<reference key="14">
    <citation type="journal article" date="1981" name="Nature">
        <title>Assignment of the disulphide bonds of leukocyte interferon.</title>
        <authorList>
            <person name="Wetzel R."/>
        </authorList>
    </citation>
    <scope>DISULFIDE BOND</scope>
</reference>
<reference key="15">
    <citation type="journal article" date="1993" name="Neurology">
        <title>Interferon beta-1b is effective in relapsing-remitting multiple sclerosis. I. Clinical results of a multicenter, randomized, double-blind, placebo-controlled trial.</title>
        <authorList>
            <consortium name="The IFNB Multiple Sclerosis Study Group"/>
        </authorList>
    </citation>
    <scope>PHARMACEUTICAL</scope>
</reference>
<reference key="16">
    <citation type="journal article" date="1993" name="Neurology">
        <title>Interferon beta-1b is effective in relapsing-remitting multiple sclerosis. II. MRI analysis results of a multicenter, randomized, double-blind, placebo-controlled trial. UBC MS/MRI Study Group and the IFNB Multiple Sclerosis Study Group.</title>
        <authorList>
            <person name="Paty D.W."/>
            <person name="Li D.K."/>
        </authorList>
    </citation>
    <scope>PHARMACEUTICAL</scope>
</reference>
<reference key="17">
    <citation type="journal article" date="1994" name="EMBO J.">
        <title>Differential tyrosine phosphorylation of the IFNAR chain of the type I interferon receptor and of an associated surface protein in response to IFN-alpha and IFN-beta.</title>
        <authorList>
            <person name="Abramovich C."/>
            <person name="Shulman L.M."/>
            <person name="Ratovitski E."/>
            <person name="Harroch S."/>
            <person name="Tovey M."/>
            <person name="Eid P."/>
            <person name="Revel M."/>
        </authorList>
    </citation>
    <scope>FUNCTION</scope>
</reference>
<reference key="18">
    <citation type="journal article" date="1994" name="J. Biol. Chem.">
        <title>Tyrosine phosphorylation of the alpha and beta subunits of the type I interferon receptor. Interferon-beta selectively induces tyrosine phosphorylation of an alpha subunit-associated protein.</title>
        <authorList>
            <person name="Platanias L.C."/>
            <person name="Uddin S."/>
            <person name="Colamonici O.R."/>
        </authorList>
    </citation>
    <scope>FUNCTION</scope>
</reference>
<reference key="19">
    <citation type="journal article" date="1995" name="J. Biol. Chem.">
        <title>Cloning and expression of a long form of the beta subunit of the interferon alpha beta receptor that is required for signaling.</title>
        <authorList>
            <person name="Domanski P."/>
            <person name="Witte M."/>
            <person name="Kellum M."/>
            <person name="Rubinstein M."/>
            <person name="Hackett R."/>
            <person name="Pitha P."/>
            <person name="Colamonici O.R."/>
        </authorList>
    </citation>
    <scope>FUNCTION</scope>
</reference>
<reference key="20">
    <citation type="journal article" date="1996" name="J. Biol. Chem.">
        <title>Differences in interferon alpha and beta signaling. Interferon beta selectively induces the interaction of the alpha and betaL subunits of the type I interferon receptor.</title>
        <authorList>
            <person name="Platanias L.C."/>
            <person name="Uddin S."/>
            <person name="Domanski P."/>
            <person name="Colamonici O.R."/>
        </authorList>
    </citation>
    <scope>FUNCTION</scope>
</reference>
<reference key="21">
    <citation type="journal article" date="1996" name="J. Biol. Chem.">
        <title>The human type I interferon receptor. Identification of the interferon beta-specific receptor-associated phosphoprotein.</title>
        <authorList>
            <person name="Croze E."/>
            <person name="Russell-Harde D."/>
            <person name="Wagner T.C."/>
            <person name="Pu H."/>
            <person name="Pfeffer L.M."/>
            <person name="Perez H.D."/>
        </authorList>
    </citation>
    <scope>FUNCTION</scope>
</reference>
<reference key="22">
    <citation type="journal article" date="1996" name="Mult. Scler.">
        <title>Interferon beta treatment for multiple sclerosis: persisting questions.</title>
        <authorList>
            <person name="Goodkin D.E."/>
        </authorList>
    </citation>
    <scope>PHARMACEUTICAL</scope>
</reference>
<reference key="23">
    <citation type="journal article" date="1999" name="Biochem. Biophys. Res. Commun.">
        <title>Formation of a uniquely stable type I interferon receptor complex by interferon beta is dependent upon particular interactions between interferon beta and its receptor and independent of tyrosine phosphorylation.</title>
        <authorList>
            <person name="Russell-Harde D."/>
            <person name="Wagner T.C."/>
            <person name="Perez H.D."/>
            <person name="Croze E."/>
        </authorList>
    </citation>
    <scope>FUNCTION</scope>
</reference>
<reference key="24">
    <citation type="journal article" date="1999" name="J. Mol. Biol.">
        <title>Mutational and structural analysis of the binding interface between type I interferons and their receptor Ifnar2.</title>
        <authorList>
            <person name="Piehler J."/>
            <person name="Schreiber G."/>
        </authorList>
    </citation>
    <scope>FUNCTION</scope>
</reference>
<reference key="25">
    <citation type="journal article" date="1997" name="Proc. Natl. Acad. Sci. U.S.A.">
        <title>The crystal structure of human interferon beta at 2.2-A resolution.</title>
        <authorList>
            <person name="Karpusas M."/>
            <person name="Nolte M."/>
            <person name="Benton C.B."/>
            <person name="Meier W."/>
            <person name="Lipscomb W.N."/>
            <person name="Goelz S."/>
        </authorList>
    </citation>
    <scope>X-RAY CRYSTALLOGRAPHY (2.2 ANGSTROMS)</scope>
    <scope>SUBUNIT</scope>
    <scope>DISULFIDE BOND</scope>
    <scope>GLYCOSYLATION AT ASN-101</scope>
</reference>
<reference key="26">
    <citation type="journal article" date="2006" name="Science">
        <title>The consensus coding sequences of human breast and colorectal cancers.</title>
        <authorList>
            <person name="Sjoeblom T."/>
            <person name="Jones S."/>
            <person name="Wood L.D."/>
            <person name="Parsons D.W."/>
            <person name="Lin J."/>
            <person name="Barber T.D."/>
            <person name="Mandelker D."/>
            <person name="Leary R.J."/>
            <person name="Ptak J."/>
            <person name="Silliman N."/>
            <person name="Szabo S."/>
            <person name="Buckhaults P."/>
            <person name="Farrell C."/>
            <person name="Meeh P."/>
            <person name="Markowitz S.D."/>
            <person name="Willis J."/>
            <person name="Dawson D."/>
            <person name="Willson J.K.V."/>
            <person name="Gazdar A.F."/>
            <person name="Hartigan J."/>
            <person name="Wu L."/>
            <person name="Liu C."/>
            <person name="Parmigiani G."/>
            <person name="Park B.H."/>
            <person name="Bachman K.E."/>
            <person name="Papadopoulos N."/>
            <person name="Vogelstein B."/>
            <person name="Kinzler K.W."/>
            <person name="Velculescu V.E."/>
        </authorList>
    </citation>
    <scope>VARIANT [LARGE SCALE ANALYSIS] CYS-164</scope>
</reference>
<organism>
    <name type="scientific">Homo sapiens</name>
    <name type="common">Human</name>
    <dbReference type="NCBI Taxonomy" id="9606"/>
    <lineage>
        <taxon>Eukaryota</taxon>
        <taxon>Metazoa</taxon>
        <taxon>Chordata</taxon>
        <taxon>Craniata</taxon>
        <taxon>Vertebrata</taxon>
        <taxon>Euteleostomi</taxon>
        <taxon>Mammalia</taxon>
        <taxon>Eutheria</taxon>
        <taxon>Euarchontoglires</taxon>
        <taxon>Primates</taxon>
        <taxon>Haplorrhini</taxon>
        <taxon>Catarrhini</taxon>
        <taxon>Hominidae</taxon>
        <taxon>Homo</taxon>
    </lineage>
</organism>
<proteinExistence type="evidence at protein level"/>
<sequence length="187" mass="22294">MTNKCLLQIALLLCFSTTALSMSYNLLGFLQRSSNFQCQKLLWQLNGRLEYCLKDRMNFDIPEEIKQLQQFQKEDAALTIYEMLQNIFAIFRQDSSSTGWNETIVENLLANVYHQINHLKTVLEEKLEKEDFTRGKLMSSLHLKRYYGRILHYLKAKEYSHCAWTIVRVEILRNFYFINRLTGYLRN</sequence>